<name>CASB_SHEEP</name>
<keyword id="KW-0903">Direct protein sequencing</keyword>
<keyword id="KW-0494">Milk protein</keyword>
<keyword id="KW-0597">Phosphoprotein</keyword>
<keyword id="KW-1185">Reference proteome</keyword>
<keyword id="KW-0964">Secreted</keyword>
<keyword id="KW-0732">Signal</keyword>
<accession>P11839</accession>
<accession>Q69B25</accession>
<dbReference type="EMBL" id="X16482">
    <property type="protein sequence ID" value="CAA34502.1"/>
    <property type="molecule type" value="mRNA"/>
</dbReference>
<dbReference type="EMBL" id="X79703">
    <property type="protein sequence ID" value="CAA56139.1"/>
    <property type="molecule type" value="Genomic_DNA"/>
</dbReference>
<dbReference type="EMBL" id="AY444504">
    <property type="protein sequence ID" value="AAS17942.1"/>
    <property type="molecule type" value="Genomic_DNA"/>
</dbReference>
<dbReference type="PIR" id="A32979">
    <property type="entry name" value="A32979"/>
</dbReference>
<dbReference type="RefSeq" id="NP_001009373.1">
    <property type="nucleotide sequence ID" value="NM_001009373.1"/>
</dbReference>
<dbReference type="SMR" id="P11839"/>
<dbReference type="STRING" id="9940.ENSOARP00000011245"/>
<dbReference type="Allergome" id="1241">
    <property type="allergen name" value="Ovi a 8"/>
</dbReference>
<dbReference type="Allergome" id="2964">
    <property type="allergen name" value="Ovi a 11"/>
</dbReference>
<dbReference type="PaxDb" id="9940-ENSOARP00000011245"/>
<dbReference type="Ensembl" id="ENSOART00020001812">
    <property type="protein sequence ID" value="ENSOARP00020001505"/>
    <property type="gene ID" value="ENSOARG00020001214"/>
</dbReference>
<dbReference type="Ensembl" id="ENSOART00180060062">
    <property type="protein sequence ID" value="ENSOARP00180032368"/>
    <property type="gene ID" value="ENSOARG00180035608"/>
</dbReference>
<dbReference type="Ensembl" id="ENSOART00185059161">
    <property type="protein sequence ID" value="ENSOARP00185030065"/>
    <property type="gene ID" value="ENSOARG00185035428"/>
</dbReference>
<dbReference type="Ensembl" id="ENSOART00215066796">
    <property type="protein sequence ID" value="ENSOARP00215035775"/>
    <property type="gene ID" value="ENSOARG00215039599"/>
</dbReference>
<dbReference type="Ensembl" id="ENSOART00225066890">
    <property type="protein sequence ID" value="ENSOARP00225033863"/>
    <property type="gene ID" value="ENSOARG00225040364"/>
</dbReference>
<dbReference type="Ensembl" id="ENSOART00260018824">
    <property type="protein sequence ID" value="ENSOARP00260009479"/>
    <property type="gene ID" value="ENSOARG00260011600"/>
</dbReference>
<dbReference type="GeneID" id="443391"/>
<dbReference type="KEGG" id="oas:443391"/>
<dbReference type="CTD" id="1447"/>
<dbReference type="eggNOG" id="ENOG502RU0R">
    <property type="taxonomic scope" value="Eukaryota"/>
</dbReference>
<dbReference type="OrthoDB" id="9838331at2759"/>
<dbReference type="Proteomes" id="UP000002356">
    <property type="component" value="Unplaced"/>
</dbReference>
<dbReference type="GO" id="GO:0005615">
    <property type="term" value="C:extracellular space"/>
    <property type="evidence" value="ECO:0007669"/>
    <property type="project" value="TreeGrafter"/>
</dbReference>
<dbReference type="InterPro" id="IPR001588">
    <property type="entry name" value="Casein"/>
</dbReference>
<dbReference type="InterPro" id="IPR016345">
    <property type="entry name" value="Casein_beta"/>
</dbReference>
<dbReference type="InterPro" id="IPR031305">
    <property type="entry name" value="Casein_CS"/>
</dbReference>
<dbReference type="PANTHER" id="PTHR11500">
    <property type="entry name" value="BETA CASEIN"/>
    <property type="match status" value="1"/>
</dbReference>
<dbReference type="PANTHER" id="PTHR11500:SF0">
    <property type="entry name" value="BETA-CASEIN"/>
    <property type="match status" value="1"/>
</dbReference>
<dbReference type="Pfam" id="PF00363">
    <property type="entry name" value="Casein"/>
    <property type="match status" value="1"/>
</dbReference>
<dbReference type="PIRSF" id="PIRSF002372">
    <property type="entry name" value="Beta-casein"/>
    <property type="match status" value="1"/>
</dbReference>
<dbReference type="PROSITE" id="PS00306">
    <property type="entry name" value="CASEIN_ALPHA_BETA"/>
    <property type="match status" value="1"/>
</dbReference>
<evidence type="ECO:0000250" key="1">
    <source>
        <dbReference type="UniProtKB" id="P05814"/>
    </source>
</evidence>
<evidence type="ECO:0000250" key="2">
    <source>
        <dbReference type="UniProtKB" id="Q9GKK3"/>
    </source>
</evidence>
<evidence type="ECO:0000269" key="3">
    <source>
    </source>
</evidence>
<evidence type="ECO:0000269" key="4">
    <source>
    </source>
</evidence>
<evidence type="ECO:0000305" key="5"/>
<protein>
    <recommendedName>
        <fullName>Beta-casein</fullName>
    </recommendedName>
</protein>
<comment type="function">
    <text>Important role in determination of the surface properties of the casein micelles.</text>
</comment>
<comment type="subcellular location">
    <subcellularLocation>
        <location>Secreted</location>
    </subcellularLocation>
</comment>
<comment type="tissue specificity">
    <text>Mammary gland specific. Secreted in milk.</text>
</comment>
<comment type="polymorphism">
    <text>The frequency of variant Val-198 is 0.237, 0.244 and 0.176 in Italian breeds Comisana, Sarda and Sopravissana, respectively.</text>
</comment>
<comment type="similarity">
    <text evidence="5">Belongs to the beta-casein family.</text>
</comment>
<sequence>MKVLILACLVALALAREQEELNVVGETVESLSSSEESITHINKKIEKFQSEEQQQTEDELQDKIHPFAQAQSLVYPFTGPIPNSLPQNILPLTQTPVVVPPFLQPEIMGVPKVKETMVPKHKEMPFPKYPVEPFTESQSLTLTDVEKLHLPLPLVQSWMHQPPQPLPPTVMFPPQSVLSLSQPKVLPVPQKAVPQRDMPIQAFLLYQEPVLGPVRGPFPILV</sequence>
<organism>
    <name type="scientific">Ovis aries</name>
    <name type="common">Sheep</name>
    <dbReference type="NCBI Taxonomy" id="9940"/>
    <lineage>
        <taxon>Eukaryota</taxon>
        <taxon>Metazoa</taxon>
        <taxon>Chordata</taxon>
        <taxon>Craniata</taxon>
        <taxon>Vertebrata</taxon>
        <taxon>Euteleostomi</taxon>
        <taxon>Mammalia</taxon>
        <taxon>Eutheria</taxon>
        <taxon>Laurasiatheria</taxon>
        <taxon>Artiodactyla</taxon>
        <taxon>Ruminantia</taxon>
        <taxon>Pecora</taxon>
        <taxon>Bovidae</taxon>
        <taxon>Caprinae</taxon>
        <taxon>Ovis</taxon>
    </lineage>
</organism>
<proteinExistence type="evidence at protein level"/>
<reference key="1">
    <citation type="journal article" date="1989" name="Biochimie">
        <title>Complete nucleotide sequence of ovine beta-casein cDNA: inter-species comparison.</title>
        <authorList>
            <person name="Provot C."/>
            <person name="Persuy M.A."/>
            <person name="Mercier J.-C."/>
        </authorList>
    </citation>
    <scope>NUCLEOTIDE SEQUENCE [MRNA]</scope>
</reference>
<reference key="2">
    <citation type="journal article" date="1995" name="Gene">
        <title>Complete sequence of the ovine beta-casein-encoding gene and interspecies comparison.</title>
        <authorList>
            <person name="Provot C."/>
            <person name="Persuy M.A."/>
            <person name="Mercier J.-C."/>
        </authorList>
    </citation>
    <scope>NUCLEOTIDE SEQUENCE [GENOMIC DNA]</scope>
</reference>
<reference key="3">
    <citation type="journal article" date="1979" name="Eur. J. Biochem.">
        <title>The primary structure of the ovine beta-caseins.</title>
        <authorList>
            <person name="Richardson B.C."/>
            <person name="Mercier J.-C."/>
        </authorList>
    </citation>
    <scope>PROTEIN SEQUENCE OF 16-222</scope>
</reference>
<reference key="4">
    <citation type="journal article" date="2004" name="J. Dairy Sci.">
        <title>Single nucleotide polymorphisms in the ovine casein genes detected by polymerase chain reaction-single strand conformation polymorphism.</title>
        <authorList>
            <person name="Ceriotti G."/>
            <person name="Chessa S."/>
            <person name="Bolla P."/>
            <person name="Budelli E."/>
            <person name="Bianchi L."/>
            <person name="Duranti E."/>
            <person name="Caroli A."/>
        </authorList>
    </citation>
    <scope>NUCLEOTIDE SEQUENCE [GENOMIC DNA] OF 123-221</scope>
    <scope>VARIANT VAL-198</scope>
    <source>
        <strain>Comisana</strain>
        <strain>Sarda</strain>
        <strain>Sopravissana</strain>
        <tissue>Blood</tissue>
    </source>
</reference>
<gene>
    <name type="primary">CSN2</name>
</gene>
<feature type="signal peptide" evidence="4">
    <location>
        <begin position="1"/>
        <end position="15"/>
    </location>
</feature>
<feature type="chain" id="PRO_0000004481" description="Beta-casein">
    <location>
        <begin position="16"/>
        <end position="222"/>
    </location>
</feature>
<feature type="modified residue" description="Phosphothreonine" evidence="2">
    <location>
        <position position="27"/>
    </location>
</feature>
<feature type="modified residue" description="Phosphoserine" evidence="1">
    <location>
        <position position="30"/>
    </location>
</feature>
<feature type="modified residue" description="Phosphoserine" evidence="1">
    <location>
        <position position="32"/>
    </location>
</feature>
<feature type="modified residue" description="Phosphoserine" evidence="1">
    <location>
        <position position="33"/>
    </location>
</feature>
<feature type="modified residue" description="Phosphoserine" evidence="1">
    <location>
        <position position="34"/>
    </location>
</feature>
<feature type="sequence variant" evidence="3">
    <original>M</original>
    <variation>V</variation>
    <location>
        <position position="198"/>
    </location>
</feature>
<feature type="sequence conflict" description="In Ref. 3; AA sequence." evidence="5" ref="3">
    <original>A</original>
    <variation>T</variation>
    <location>
        <position position="70"/>
    </location>
</feature>
<feature type="sequence conflict" description="In Ref. 3; AA sequence." evidence="5" ref="3">
    <original>P</original>
    <variation>A</variation>
    <location>
        <position position="82"/>
    </location>
</feature>